<organism>
    <name type="scientific">Influenza A virus (strain A/Duck/Hong Kong/7/1975 H3N2)</name>
    <dbReference type="NCBI Taxonomy" id="352551"/>
    <lineage>
        <taxon>Viruses</taxon>
        <taxon>Riboviria</taxon>
        <taxon>Orthornavirae</taxon>
        <taxon>Negarnaviricota</taxon>
        <taxon>Polyploviricotina</taxon>
        <taxon>Insthoviricetes</taxon>
        <taxon>Articulavirales</taxon>
        <taxon>Orthomyxoviridae</taxon>
        <taxon>Alphainfluenzavirus</taxon>
        <taxon>Alphainfluenzavirus influenzae</taxon>
        <taxon>Influenza A virus</taxon>
    </lineage>
</organism>
<sequence length="550" mass="61549">QDLPGNDNSTATLCLGHHAVPNGTIVKTITDDQIEVTNATELVQSSSTGKICNNPHKILDGRDCTLIDALLGDPHCDVFQDETWDLFVERGNAFSSCYPYDVPDYASLRSLVASSGTLEFITEGFTWTGVTQNGGSSACKRGPASGFFSRLNWLTKSGSTYPVLNVTMPNNDNFDKLYIWGVHHPSTNQEQTNLYVQASGRVTVSTRRSQQTIIPNIGSRPWVRGQSGRISIYWTIVKPGDVLVINSNGNLIAPRGYFKMRTGKSSIMRSDAPIDTCVSECITPNGSIPNDKPFQNVNKITYGACPKYVKQNSLKLATGMRNVPEKQTRGLFGAIAGFIENGWEGMIDGWYGFRHQNSEGTGQAADLKSTQAAIDQINGKLNRVIKKTNEKFHQIEKEFSEVEGRIQDLEKYVEDTKIDLWSYNADVLVALENQHTIDLTDSEMNKLFEKTRRQLRENAEDMGNGCFKIYHKCDNACIESIRNGTYDHDIYRDEALNNRFQIKGVELKSGYKDWILWISFAISCFLLCVVLLGFIMWACQRGNIRCNICI</sequence>
<feature type="chain" id="PRO_0000038930" description="Hemagglutinin HA1 chain">
    <location>
        <begin position="1"/>
        <end position="328"/>
    </location>
</feature>
<feature type="chain" id="PRO_0000038931" description="Hemagglutinin HA2 chain" evidence="1">
    <location>
        <begin position="330"/>
        <end position="550"/>
    </location>
</feature>
<feature type="topological domain" description="Extracellular" evidence="1">
    <location>
        <begin position="1"/>
        <end position="514"/>
    </location>
</feature>
<feature type="transmembrane region" description="Helical" evidence="1">
    <location>
        <begin position="515"/>
        <end position="535"/>
    </location>
</feature>
<feature type="topological domain" description="Cytoplasmic" evidence="1">
    <location>
        <begin position="536"/>
        <end position="550"/>
    </location>
</feature>
<feature type="site" description="Cleavage; by host" evidence="1">
    <location>
        <begin position="329"/>
        <end position="330"/>
    </location>
</feature>
<feature type="lipid moiety-binding region" description="S-palmitoyl cysteine; by host" evidence="1">
    <location>
        <position position="539"/>
    </location>
</feature>
<feature type="lipid moiety-binding region" description="S-palmitoyl cysteine; by host" evidence="1">
    <location>
        <position position="546"/>
    </location>
</feature>
<feature type="lipid moiety-binding region" description="S-palmitoyl cysteine; by host" evidence="1">
    <location>
        <position position="549"/>
    </location>
</feature>
<feature type="glycosylation site" description="N-linked (GlcNAc...) asparagine; by host" evidence="1">
    <location>
        <position position="8"/>
    </location>
</feature>
<feature type="glycosylation site" description="N-linked (GlcNAc...) asparagine; by host" evidence="1">
    <location>
        <position position="22"/>
    </location>
</feature>
<feature type="glycosylation site" description="N-linked (GlcNAc...) asparagine; by host" evidence="1">
    <location>
        <position position="38"/>
    </location>
</feature>
<feature type="glycosylation site" description="N-linked (GlcNAc...) asparagine; by host" evidence="1">
    <location>
        <position position="165"/>
    </location>
</feature>
<feature type="glycosylation site" description="N-linked (GlcNAc...) asparagine; by host" evidence="1">
    <location>
        <position position="285"/>
    </location>
</feature>
<feature type="glycosylation site" description="N-linked (GlcNAc...) asparagine; by host" evidence="1">
    <location>
        <position position="483"/>
    </location>
</feature>
<feature type="disulfide bond" description="Interchain (between HA1 and HA2 chains)" evidence="1">
    <location>
        <begin position="14"/>
        <end position="466"/>
    </location>
</feature>
<feature type="disulfide bond" evidence="1">
    <location>
        <begin position="52"/>
        <end position="277"/>
    </location>
</feature>
<feature type="disulfide bond" evidence="1">
    <location>
        <begin position="64"/>
        <end position="76"/>
    </location>
</feature>
<feature type="disulfide bond" evidence="1">
    <location>
        <begin position="97"/>
        <end position="139"/>
    </location>
</feature>
<feature type="disulfide bond" evidence="1">
    <location>
        <begin position="281"/>
        <end position="305"/>
    </location>
</feature>
<feature type="disulfide bond" evidence="1">
    <location>
        <begin position="473"/>
        <end position="477"/>
    </location>
</feature>
<feature type="non-terminal residue">
    <location>
        <position position="1"/>
    </location>
</feature>
<organismHost>
    <name type="scientific">Aves</name>
    <dbReference type="NCBI Taxonomy" id="8782"/>
</organismHost>
<organismHost>
    <name type="scientific">Homo sapiens</name>
    <name type="common">Human</name>
    <dbReference type="NCBI Taxonomy" id="9606"/>
</organismHost>
<organismHost>
    <name type="scientific">Mysticeti</name>
    <name type="common">baleen whales</name>
    <dbReference type="NCBI Taxonomy" id="9761"/>
</organismHost>
<organismHost>
    <name type="scientific">Phocidae</name>
    <name type="common">true seals</name>
    <dbReference type="NCBI Taxonomy" id="9709"/>
</organismHost>
<organismHost>
    <name type="scientific">Sus scrofa</name>
    <name type="common">Pig</name>
    <dbReference type="NCBI Taxonomy" id="9823"/>
</organismHost>
<accession>P43257</accession>
<reference key="1">
    <citation type="journal article" date="1991" name="J. Gen. Virol.">
        <title>Molecular evidence for a role of domestic ducks in the introduction of avian H3 influenza viruses to pigs in southern China, where the A/Hong Kong/68 (H3N2) strain emerged.</title>
        <authorList>
            <person name="Yasuda J."/>
            <person name="Shortridge K.F."/>
            <person name="Shimizu Y."/>
            <person name="Kida H."/>
        </authorList>
    </citation>
    <scope>NUCLEOTIDE SEQUENCE [GENOMIC RNA]</scope>
</reference>
<comment type="function">
    <text evidence="1">Binds to sialic acid-containing receptors on the cell surface, bringing about the attachment of the virus particle to the cell. This attachment induces virion internalization either through clathrin-dependent endocytosis or through clathrin- and caveolin-independent pathway. Plays a major role in the determination of host range restriction and virulence. Class I viral fusion protein. Responsible for penetration of the virus into the cell cytoplasm by mediating the fusion of the membrane of the endocytosed virus particle with the endosomal membrane. Low pH in endosomes induces an irreversible conformational change in HA2, releasing the fusion hydrophobic peptide. Several trimers are required to form a competent fusion pore.</text>
</comment>
<comment type="subunit">
    <text evidence="1">Homotrimer of disulfide-linked HA1-HA2.</text>
</comment>
<comment type="subcellular location">
    <subcellularLocation>
        <location evidence="1">Virion membrane</location>
        <topology evidence="1">Single-pass type I membrane protein</topology>
    </subcellularLocation>
    <subcellularLocation>
        <location evidence="1">Host apical cell membrane</location>
        <topology evidence="1">Single-pass type I membrane protein</topology>
    </subcellularLocation>
    <text evidence="1">Targeted to the apical plasma membrane in epithelial polarized cells through a signal present in the transmembrane domain. Associated with glycosphingolipid- and cholesterol-enriched detergent-resistant lipid rafts.</text>
</comment>
<comment type="PTM">
    <text evidence="1">Palmitoylated.</text>
</comment>
<comment type="PTM">
    <text evidence="1">In natural infection, inactive HA is matured into HA1 and HA2 outside the cell by one or more trypsin-like, arginine-specific endoprotease secreted by the bronchial epithelial cells. One identified protease that may be involved in this process is secreted in lungs by club cells.</text>
</comment>
<comment type="miscellaneous">
    <text>Major glycoprotein, comprises over 80% of the envelope proteins present in virus particle.</text>
</comment>
<comment type="miscellaneous">
    <text>The extent of infection into host organism is determined by HA. Influenza viruses bud from the apical surface of polarized epithelial cells (e.g. bronchial epithelial cells) into lumen of lungs and are therefore usually pneumotropic. The reason is that HA is cleaved by tryptase clara which is restricted to lungs. However, HAs of H5 and H7 pantropic avian viruses subtypes can be cleaved by furin and subtilisin-type enzymes, allowing the virus to grow in other organs than lungs.</text>
</comment>
<comment type="miscellaneous">
    <text>The influenza A genome consist of 8 RNA segments. Genetic variation of hemagglutinin and/or neuraminidase genes results in the emergence of new influenza strains. The mechanism of variation can be the result of point mutations or the result of genetic reassortment between segments of two different strains.</text>
</comment>
<comment type="similarity">
    <text evidence="1">Belongs to the influenza viruses hemagglutinin family.</text>
</comment>
<keyword id="KW-1167">Clathrin- and caveolin-independent endocytosis of virus by host</keyword>
<keyword id="KW-1165">Clathrin-mediated endocytosis of virus by host</keyword>
<keyword id="KW-1015">Disulfide bond</keyword>
<keyword id="KW-1170">Fusion of virus membrane with host endosomal membrane</keyword>
<keyword id="KW-1168">Fusion of virus membrane with host membrane</keyword>
<keyword id="KW-0325">Glycoprotein</keyword>
<keyword id="KW-0348">Hemagglutinin</keyword>
<keyword id="KW-1032">Host cell membrane</keyword>
<keyword id="KW-1043">Host membrane</keyword>
<keyword id="KW-0945">Host-virus interaction</keyword>
<keyword id="KW-0449">Lipoprotein</keyword>
<keyword id="KW-0472">Membrane</keyword>
<keyword id="KW-0564">Palmitate</keyword>
<keyword id="KW-0812">Transmembrane</keyword>
<keyword id="KW-1133">Transmembrane helix</keyword>
<keyword id="KW-1161">Viral attachment to host cell</keyword>
<keyword id="KW-0261">Viral envelope protein</keyword>
<keyword id="KW-1162">Viral penetration into host cytoplasm</keyword>
<keyword id="KW-0946">Virion</keyword>
<keyword id="KW-1164">Virus endocytosis by host</keyword>
<keyword id="KW-1160">Virus entry into host cell</keyword>
<proteinExistence type="inferred from homology"/>
<evidence type="ECO:0000255" key="1">
    <source>
        <dbReference type="HAMAP-Rule" id="MF_04072"/>
    </source>
</evidence>
<protein>
    <recommendedName>
        <fullName evidence="1">Hemagglutinin</fullName>
    </recommendedName>
    <component>
        <recommendedName>
            <fullName evidence="1">Hemagglutinin HA1 chain</fullName>
        </recommendedName>
    </component>
    <component>
        <recommendedName>
            <fullName evidence="1">Hemagglutinin HA2 chain</fullName>
        </recommendedName>
    </component>
</protein>
<gene>
    <name evidence="1" type="primary">HA</name>
</gene>
<dbReference type="EMBL" id="D00929">
    <property type="protein sequence ID" value="BAA00769.1"/>
    <property type="molecule type" value="Genomic_RNA"/>
</dbReference>
<dbReference type="SMR" id="P43257"/>
<dbReference type="GlyCosmos" id="P43257">
    <property type="glycosylation" value="6 sites, No reported glycans"/>
</dbReference>
<dbReference type="GO" id="GO:0020002">
    <property type="term" value="C:host cell plasma membrane"/>
    <property type="evidence" value="ECO:0007669"/>
    <property type="project" value="UniProtKB-SubCell"/>
</dbReference>
<dbReference type="GO" id="GO:0016020">
    <property type="term" value="C:membrane"/>
    <property type="evidence" value="ECO:0007669"/>
    <property type="project" value="UniProtKB-KW"/>
</dbReference>
<dbReference type="GO" id="GO:0019031">
    <property type="term" value="C:viral envelope"/>
    <property type="evidence" value="ECO:0007669"/>
    <property type="project" value="UniProtKB-KW"/>
</dbReference>
<dbReference type="GO" id="GO:0055036">
    <property type="term" value="C:virion membrane"/>
    <property type="evidence" value="ECO:0007669"/>
    <property type="project" value="UniProtKB-SubCell"/>
</dbReference>
<dbReference type="GO" id="GO:0046789">
    <property type="term" value="F:host cell surface receptor binding"/>
    <property type="evidence" value="ECO:0007669"/>
    <property type="project" value="InterPro"/>
</dbReference>
<dbReference type="GO" id="GO:0075512">
    <property type="term" value="P:clathrin-dependent endocytosis of virus by host cell"/>
    <property type="evidence" value="ECO:0007669"/>
    <property type="project" value="UniProtKB-KW"/>
</dbReference>
<dbReference type="GO" id="GO:0039654">
    <property type="term" value="P:fusion of virus membrane with host endosome membrane"/>
    <property type="evidence" value="ECO:0007669"/>
    <property type="project" value="UniProtKB-KW"/>
</dbReference>
<dbReference type="GO" id="GO:0019064">
    <property type="term" value="P:fusion of virus membrane with host plasma membrane"/>
    <property type="evidence" value="ECO:0007669"/>
    <property type="project" value="InterPro"/>
</dbReference>
<dbReference type="GO" id="GO:0019062">
    <property type="term" value="P:virion attachment to host cell"/>
    <property type="evidence" value="ECO:0007669"/>
    <property type="project" value="UniProtKB-KW"/>
</dbReference>
<dbReference type="FunFam" id="3.90.20.10:FF:000001">
    <property type="entry name" value="Hemagglutinin"/>
    <property type="match status" value="1"/>
</dbReference>
<dbReference type="FunFam" id="3.90.209.20:FF:000001">
    <property type="entry name" value="Hemagglutinin"/>
    <property type="match status" value="1"/>
</dbReference>
<dbReference type="Gene3D" id="3.90.20.10">
    <property type="match status" value="1"/>
</dbReference>
<dbReference type="Gene3D" id="3.90.209.20">
    <property type="match status" value="1"/>
</dbReference>
<dbReference type="HAMAP" id="MF_04072">
    <property type="entry name" value="INFV_HEMA"/>
    <property type="match status" value="1"/>
</dbReference>
<dbReference type="InterPro" id="IPR008980">
    <property type="entry name" value="Capsid_hemagglutn"/>
</dbReference>
<dbReference type="InterPro" id="IPR013828">
    <property type="entry name" value="Hemagglutn_HA1_a/b_dom_sf"/>
</dbReference>
<dbReference type="InterPro" id="IPR000149">
    <property type="entry name" value="Hemagglutn_influenz_A"/>
</dbReference>
<dbReference type="InterPro" id="IPR001364">
    <property type="entry name" value="Hemagglutn_influenz_A/B"/>
</dbReference>
<dbReference type="Pfam" id="PF00509">
    <property type="entry name" value="Hemagglutinin"/>
    <property type="match status" value="1"/>
</dbReference>
<dbReference type="PRINTS" id="PR00330">
    <property type="entry name" value="HEMAGGLUTN1"/>
</dbReference>
<dbReference type="PRINTS" id="PR00329">
    <property type="entry name" value="HEMAGGLUTN12"/>
</dbReference>
<dbReference type="SUPFAM" id="SSF58064">
    <property type="entry name" value="Influenza hemagglutinin (stalk)"/>
    <property type="match status" value="1"/>
</dbReference>
<dbReference type="SUPFAM" id="SSF49818">
    <property type="entry name" value="Viral protein domain"/>
    <property type="match status" value="1"/>
</dbReference>
<name>HEMA_I75A2</name>